<organism>
    <name type="scientific">Nitratidesulfovibrio vulgaris (strain DSM 19637 / Miyazaki F)</name>
    <name type="common">Desulfovibrio vulgaris</name>
    <dbReference type="NCBI Taxonomy" id="883"/>
    <lineage>
        <taxon>Bacteria</taxon>
        <taxon>Pseudomonadati</taxon>
        <taxon>Thermodesulfobacteriota</taxon>
        <taxon>Desulfovibrionia</taxon>
        <taxon>Desulfovibrionales</taxon>
        <taxon>Desulfovibrionaceae</taxon>
        <taxon>Nitratidesulfovibrio</taxon>
    </lineage>
</organism>
<accession>B8DQP8</accession>
<proteinExistence type="inferred from homology"/>
<feature type="chain" id="PRO_1000199473" description="Serine--tRNA ligase">
    <location>
        <begin position="1"/>
        <end position="425"/>
    </location>
</feature>
<feature type="binding site" evidence="1">
    <location>
        <begin position="230"/>
        <end position="232"/>
    </location>
    <ligand>
        <name>L-serine</name>
        <dbReference type="ChEBI" id="CHEBI:33384"/>
    </ligand>
</feature>
<feature type="binding site" evidence="1">
    <location>
        <begin position="261"/>
        <end position="263"/>
    </location>
    <ligand>
        <name>ATP</name>
        <dbReference type="ChEBI" id="CHEBI:30616"/>
    </ligand>
</feature>
<feature type="binding site" evidence="1">
    <location>
        <position position="284"/>
    </location>
    <ligand>
        <name>L-serine</name>
        <dbReference type="ChEBI" id="CHEBI:33384"/>
    </ligand>
</feature>
<feature type="binding site" evidence="1">
    <location>
        <begin position="348"/>
        <end position="351"/>
    </location>
    <ligand>
        <name>ATP</name>
        <dbReference type="ChEBI" id="CHEBI:30616"/>
    </ligand>
</feature>
<feature type="binding site" evidence="1">
    <location>
        <position position="384"/>
    </location>
    <ligand>
        <name>L-serine</name>
        <dbReference type="ChEBI" id="CHEBI:33384"/>
    </ligand>
</feature>
<evidence type="ECO:0000255" key="1">
    <source>
        <dbReference type="HAMAP-Rule" id="MF_00176"/>
    </source>
</evidence>
<protein>
    <recommendedName>
        <fullName evidence="1">Serine--tRNA ligase</fullName>
        <ecNumber evidence="1">6.1.1.11</ecNumber>
    </recommendedName>
    <alternativeName>
        <fullName evidence="1">Seryl-tRNA synthetase</fullName>
        <shortName evidence="1">SerRS</shortName>
    </alternativeName>
    <alternativeName>
        <fullName evidence="1">Seryl-tRNA(Ser/Sec) synthetase</fullName>
    </alternativeName>
</protein>
<name>SYS_NITV9</name>
<dbReference type="EC" id="6.1.1.11" evidence="1"/>
<dbReference type="EMBL" id="CP001197">
    <property type="protein sequence ID" value="ACL09167.1"/>
    <property type="molecule type" value="Genomic_DNA"/>
</dbReference>
<dbReference type="SMR" id="B8DQP8"/>
<dbReference type="STRING" id="883.DvMF_2224"/>
<dbReference type="KEGG" id="dvm:DvMF_2224"/>
<dbReference type="eggNOG" id="COG0172">
    <property type="taxonomic scope" value="Bacteria"/>
</dbReference>
<dbReference type="HOGENOM" id="CLU_023797_1_1_7"/>
<dbReference type="OrthoDB" id="9804647at2"/>
<dbReference type="UniPathway" id="UPA00906">
    <property type="reaction ID" value="UER00895"/>
</dbReference>
<dbReference type="GO" id="GO:0005737">
    <property type="term" value="C:cytoplasm"/>
    <property type="evidence" value="ECO:0007669"/>
    <property type="project" value="UniProtKB-SubCell"/>
</dbReference>
<dbReference type="GO" id="GO:0005524">
    <property type="term" value="F:ATP binding"/>
    <property type="evidence" value="ECO:0007669"/>
    <property type="project" value="UniProtKB-UniRule"/>
</dbReference>
<dbReference type="GO" id="GO:0004828">
    <property type="term" value="F:serine-tRNA ligase activity"/>
    <property type="evidence" value="ECO:0007669"/>
    <property type="project" value="UniProtKB-UniRule"/>
</dbReference>
<dbReference type="GO" id="GO:0016260">
    <property type="term" value="P:selenocysteine biosynthetic process"/>
    <property type="evidence" value="ECO:0007669"/>
    <property type="project" value="UniProtKB-UniRule"/>
</dbReference>
<dbReference type="GO" id="GO:0006434">
    <property type="term" value="P:seryl-tRNA aminoacylation"/>
    <property type="evidence" value="ECO:0007669"/>
    <property type="project" value="UniProtKB-UniRule"/>
</dbReference>
<dbReference type="CDD" id="cd00770">
    <property type="entry name" value="SerRS_core"/>
    <property type="match status" value="1"/>
</dbReference>
<dbReference type="Gene3D" id="3.30.930.10">
    <property type="entry name" value="Bira Bifunctional Protein, Domain 2"/>
    <property type="match status" value="1"/>
</dbReference>
<dbReference type="Gene3D" id="1.10.287.40">
    <property type="entry name" value="Serine-tRNA synthetase, tRNA binding domain"/>
    <property type="match status" value="1"/>
</dbReference>
<dbReference type="HAMAP" id="MF_00176">
    <property type="entry name" value="Ser_tRNA_synth_type1"/>
    <property type="match status" value="1"/>
</dbReference>
<dbReference type="InterPro" id="IPR002314">
    <property type="entry name" value="aa-tRNA-synt_IIb"/>
</dbReference>
<dbReference type="InterPro" id="IPR006195">
    <property type="entry name" value="aa-tRNA-synth_II"/>
</dbReference>
<dbReference type="InterPro" id="IPR045864">
    <property type="entry name" value="aa-tRNA-synth_II/BPL/LPL"/>
</dbReference>
<dbReference type="InterPro" id="IPR002317">
    <property type="entry name" value="Ser-tRNA-ligase_type_1"/>
</dbReference>
<dbReference type="InterPro" id="IPR015866">
    <property type="entry name" value="Ser-tRNA-synth_1_N"/>
</dbReference>
<dbReference type="InterPro" id="IPR042103">
    <property type="entry name" value="SerRS_1_N_sf"/>
</dbReference>
<dbReference type="InterPro" id="IPR033729">
    <property type="entry name" value="SerRS_core"/>
</dbReference>
<dbReference type="InterPro" id="IPR010978">
    <property type="entry name" value="tRNA-bd_arm"/>
</dbReference>
<dbReference type="NCBIfam" id="TIGR00414">
    <property type="entry name" value="serS"/>
    <property type="match status" value="1"/>
</dbReference>
<dbReference type="PANTHER" id="PTHR43697:SF1">
    <property type="entry name" value="SERINE--TRNA LIGASE"/>
    <property type="match status" value="1"/>
</dbReference>
<dbReference type="PANTHER" id="PTHR43697">
    <property type="entry name" value="SERYL-TRNA SYNTHETASE"/>
    <property type="match status" value="1"/>
</dbReference>
<dbReference type="Pfam" id="PF02403">
    <property type="entry name" value="Seryl_tRNA_N"/>
    <property type="match status" value="1"/>
</dbReference>
<dbReference type="Pfam" id="PF00587">
    <property type="entry name" value="tRNA-synt_2b"/>
    <property type="match status" value="1"/>
</dbReference>
<dbReference type="PIRSF" id="PIRSF001529">
    <property type="entry name" value="Ser-tRNA-synth_IIa"/>
    <property type="match status" value="1"/>
</dbReference>
<dbReference type="PRINTS" id="PR00981">
    <property type="entry name" value="TRNASYNTHSER"/>
</dbReference>
<dbReference type="SUPFAM" id="SSF55681">
    <property type="entry name" value="Class II aaRS and biotin synthetases"/>
    <property type="match status" value="1"/>
</dbReference>
<dbReference type="SUPFAM" id="SSF46589">
    <property type="entry name" value="tRNA-binding arm"/>
    <property type="match status" value="1"/>
</dbReference>
<dbReference type="PROSITE" id="PS50862">
    <property type="entry name" value="AA_TRNA_LIGASE_II"/>
    <property type="match status" value="1"/>
</dbReference>
<keyword id="KW-0030">Aminoacyl-tRNA synthetase</keyword>
<keyword id="KW-0067">ATP-binding</keyword>
<keyword id="KW-0963">Cytoplasm</keyword>
<keyword id="KW-0436">Ligase</keyword>
<keyword id="KW-0547">Nucleotide-binding</keyword>
<keyword id="KW-0648">Protein biosynthesis</keyword>
<sequence length="425" mass="47341">MLDLKLLQRSPEVVAKALADRGSSLDMAEFTALDERRRALLAEVEALKGERNKASGEVARMKRAGEDAAPLLERLSGLSDRIKDLDRETEEVKAAVNDWLLAVPNIPDASVPFGRSEADNPEVLRWGEPRAFSFAPKEHWEIGTALGGLDFERAGKLAGSRFAVYRTWAARMERALANFFLDTHVTEHGYVEIIPPFMVNRKTMTGTGQLPKFEEDLFKLEGWDYFLIPTAEVPLTNLHADDVLEEAQLPMGYAAMTPCFRSEAGSYGKDTRGLIRQHQFTKVEMVRFAHPERSFDELEKMRGHAEVLLQRLGLPYRVITLCTGDMGFSSAKTYDIEVWLPGQNAYREISSCSNCGDFQARRAGIRFRPAGGGKPEFAHTLNGSGLAVGRALVAVIENYQQEDGSVVIPEVLRPYMGGMERVTAE</sequence>
<gene>
    <name evidence="1" type="primary">serS</name>
    <name type="ordered locus">DvMF_2224</name>
</gene>
<reference key="1">
    <citation type="submission" date="2008-10" db="EMBL/GenBank/DDBJ databases">
        <title>Complete sequence of Desulfovibrio vulgaris str. 'Miyazaki F'.</title>
        <authorList>
            <person name="Lucas S."/>
            <person name="Copeland A."/>
            <person name="Lapidus A."/>
            <person name="Glavina del Rio T."/>
            <person name="Dalin E."/>
            <person name="Tice H."/>
            <person name="Bruce D."/>
            <person name="Goodwin L."/>
            <person name="Pitluck S."/>
            <person name="Sims D."/>
            <person name="Brettin T."/>
            <person name="Detter J.C."/>
            <person name="Han C."/>
            <person name="Larimer F."/>
            <person name="Land M."/>
            <person name="Hauser L."/>
            <person name="Kyrpides N."/>
            <person name="Mikhailova N."/>
            <person name="Hazen T.C."/>
            <person name="Richardson P."/>
        </authorList>
    </citation>
    <scope>NUCLEOTIDE SEQUENCE [LARGE SCALE GENOMIC DNA]</scope>
    <source>
        <strain>DSM 19637 / Miyazaki F</strain>
    </source>
</reference>
<comment type="function">
    <text evidence="1">Catalyzes the attachment of serine to tRNA(Ser). Is also able to aminoacylate tRNA(Sec) with serine, to form the misacylated tRNA L-seryl-tRNA(Sec), which will be further converted into selenocysteinyl-tRNA(Sec).</text>
</comment>
<comment type="catalytic activity">
    <reaction evidence="1">
        <text>tRNA(Ser) + L-serine + ATP = L-seryl-tRNA(Ser) + AMP + diphosphate + H(+)</text>
        <dbReference type="Rhea" id="RHEA:12292"/>
        <dbReference type="Rhea" id="RHEA-COMP:9669"/>
        <dbReference type="Rhea" id="RHEA-COMP:9703"/>
        <dbReference type="ChEBI" id="CHEBI:15378"/>
        <dbReference type="ChEBI" id="CHEBI:30616"/>
        <dbReference type="ChEBI" id="CHEBI:33019"/>
        <dbReference type="ChEBI" id="CHEBI:33384"/>
        <dbReference type="ChEBI" id="CHEBI:78442"/>
        <dbReference type="ChEBI" id="CHEBI:78533"/>
        <dbReference type="ChEBI" id="CHEBI:456215"/>
        <dbReference type="EC" id="6.1.1.11"/>
    </reaction>
</comment>
<comment type="catalytic activity">
    <reaction evidence="1">
        <text>tRNA(Sec) + L-serine + ATP = L-seryl-tRNA(Sec) + AMP + diphosphate + H(+)</text>
        <dbReference type="Rhea" id="RHEA:42580"/>
        <dbReference type="Rhea" id="RHEA-COMP:9742"/>
        <dbReference type="Rhea" id="RHEA-COMP:10128"/>
        <dbReference type="ChEBI" id="CHEBI:15378"/>
        <dbReference type="ChEBI" id="CHEBI:30616"/>
        <dbReference type="ChEBI" id="CHEBI:33019"/>
        <dbReference type="ChEBI" id="CHEBI:33384"/>
        <dbReference type="ChEBI" id="CHEBI:78442"/>
        <dbReference type="ChEBI" id="CHEBI:78533"/>
        <dbReference type="ChEBI" id="CHEBI:456215"/>
        <dbReference type="EC" id="6.1.1.11"/>
    </reaction>
</comment>
<comment type="pathway">
    <text evidence="1">Aminoacyl-tRNA biosynthesis; selenocysteinyl-tRNA(Sec) biosynthesis; L-seryl-tRNA(Sec) from L-serine and tRNA(Sec): step 1/1.</text>
</comment>
<comment type="subunit">
    <text evidence="1">Homodimer. The tRNA molecule binds across the dimer.</text>
</comment>
<comment type="subcellular location">
    <subcellularLocation>
        <location evidence="1">Cytoplasm</location>
    </subcellularLocation>
</comment>
<comment type="domain">
    <text evidence="1">Consists of two distinct domains, a catalytic core and a N-terminal extension that is involved in tRNA binding.</text>
</comment>
<comment type="similarity">
    <text evidence="1">Belongs to the class-II aminoacyl-tRNA synthetase family. Type-1 seryl-tRNA synthetase subfamily.</text>
</comment>